<evidence type="ECO:0000269" key="1">
    <source>
    </source>
</evidence>
<evidence type="ECO:0000303" key="2">
    <source>
    </source>
</evidence>
<evidence type="ECO:0000305" key="3"/>
<evidence type="ECO:0000305" key="4">
    <source>
    </source>
</evidence>
<evidence type="ECO:0000312" key="5">
    <source>
        <dbReference type="EMBL" id="EMA29701.1"/>
    </source>
</evidence>
<organism>
    <name type="scientific">Haloarcula japonica (strain ATCC 49778 / DSM 6131 / JCM 7785 / NBRC 101032 / NCIMB 13157 / TR-1)</name>
    <dbReference type="NCBI Taxonomy" id="1227453"/>
    <lineage>
        <taxon>Archaea</taxon>
        <taxon>Methanobacteriati</taxon>
        <taxon>Methanobacteriota</taxon>
        <taxon>Stenosarchaea group</taxon>
        <taxon>Halobacteria</taxon>
        <taxon>Halobacteriales</taxon>
        <taxon>Haloarculaceae</taxon>
        <taxon>Haloarcula</taxon>
    </lineage>
</organism>
<protein>
    <recommendedName>
        <fullName evidence="2">Carotenoid 3,4-desaturase</fullName>
        <ecNumber evidence="1">1.3.99.37</ecNumber>
    </recommendedName>
    <alternativeName>
        <fullName evidence="3">1-hydroxy-2-isopentenylcarotenoid 3,4-desaturase</fullName>
    </alternativeName>
</protein>
<dbReference type="EC" id="1.3.99.37" evidence="1"/>
<dbReference type="EMBL" id="LC008542">
    <property type="protein sequence ID" value="BAP82509.1"/>
    <property type="molecule type" value="Genomic_DNA"/>
</dbReference>
<dbReference type="EMBL" id="AOLY01000037">
    <property type="protein sequence ID" value="EMA29701.1"/>
    <property type="molecule type" value="Genomic_DNA"/>
</dbReference>
<dbReference type="RefSeq" id="WP_004593284.1">
    <property type="nucleotide sequence ID" value="NZ_AOLY01000037.1"/>
</dbReference>
<dbReference type="SMR" id="A0A0A1GKA2"/>
<dbReference type="STRING" id="1227453.C444_12917"/>
<dbReference type="KEGG" id="ag:BAP82509"/>
<dbReference type="PATRIC" id="fig|1227453.3.peg.2543"/>
<dbReference type="eggNOG" id="arCOG01521">
    <property type="taxonomic scope" value="Archaea"/>
</dbReference>
<dbReference type="OrthoDB" id="40741at2157"/>
<dbReference type="BioCyc" id="MetaCyc:MONOMER-20365"/>
<dbReference type="BRENDA" id="1.3.99.37">
    <property type="organism ID" value="13658"/>
</dbReference>
<dbReference type="Proteomes" id="UP000011524">
    <property type="component" value="Unassembled WGS sequence"/>
</dbReference>
<dbReference type="GO" id="GO:0016627">
    <property type="term" value="F:oxidoreductase activity, acting on the CH-CH group of donors"/>
    <property type="evidence" value="ECO:0000314"/>
    <property type="project" value="UniProtKB"/>
</dbReference>
<dbReference type="GO" id="GO:0016117">
    <property type="term" value="P:carotenoid biosynthetic process"/>
    <property type="evidence" value="ECO:0000315"/>
    <property type="project" value="UniProtKB"/>
</dbReference>
<dbReference type="Gene3D" id="3.50.50.60">
    <property type="entry name" value="FAD/NAD(P)-binding domain"/>
    <property type="match status" value="2"/>
</dbReference>
<dbReference type="InterPro" id="IPR002937">
    <property type="entry name" value="Amino_oxidase"/>
</dbReference>
<dbReference type="InterPro" id="IPR014105">
    <property type="entry name" value="Carotenoid/retinoid_OxRdtase"/>
</dbReference>
<dbReference type="InterPro" id="IPR036188">
    <property type="entry name" value="FAD/NAD-bd_sf"/>
</dbReference>
<dbReference type="NCBIfam" id="TIGR02734">
    <property type="entry name" value="crtI_fam"/>
    <property type="match status" value="1"/>
</dbReference>
<dbReference type="PANTHER" id="PTHR43734">
    <property type="entry name" value="PHYTOENE DESATURASE"/>
    <property type="match status" value="1"/>
</dbReference>
<dbReference type="PANTHER" id="PTHR43734:SF1">
    <property type="entry name" value="PHYTOENE DESATURASE"/>
    <property type="match status" value="1"/>
</dbReference>
<dbReference type="Pfam" id="PF01593">
    <property type="entry name" value="Amino_oxidase"/>
    <property type="match status" value="1"/>
</dbReference>
<dbReference type="SUPFAM" id="SSF51905">
    <property type="entry name" value="FAD/NAD(P)-binding domain"/>
    <property type="match status" value="1"/>
</dbReference>
<feature type="chain" id="PRO_0000435601" description="Carotenoid 3,4-desaturase">
    <location>
        <begin position="1"/>
        <end position="495"/>
    </location>
</feature>
<keyword id="KW-0125">Carotenoid biosynthesis</keyword>
<keyword id="KW-0560">Oxidoreductase</keyword>
<proteinExistence type="evidence at protein level"/>
<reference key="1">
    <citation type="journal article" date="2015" name="J. Bacteriol.">
        <title>Complete biosynthetic pathway of the C50 carotenoid bacterioruberin from lycopene in the extremely halophilic archaeon Haloarcula japonica.</title>
        <authorList>
            <person name="Yang Y."/>
            <person name="Yatsunami R."/>
            <person name="Ando A."/>
            <person name="Miyoko N."/>
            <person name="Fukui T."/>
            <person name="Takaichi S."/>
            <person name="Nakamura S."/>
        </authorList>
    </citation>
    <scope>NUCLEOTIDE SEQUENCE [GENOMIC DNA]</scope>
    <scope>FUNCTION</scope>
    <scope>CATALYTIC ACTIVITY</scope>
    <scope>DISRUPTION PHENOTYPE</scope>
    <source>
        <strain>ATCC 49778 / DSM 6131 / JCM 7785 / NBRC 101032 / NCIMB 13157 / TR-1</strain>
    </source>
</reference>
<reference key="2">
    <citation type="journal article" date="2014" name="PLoS Genet.">
        <title>Phylogenetically driven sequencing of extremely halophilic archaea reveals strategies for static and dynamic osmo-response.</title>
        <authorList>
            <person name="Becker E.A."/>
            <person name="Seitzer P.M."/>
            <person name="Tritt A."/>
            <person name="Larsen D."/>
            <person name="Krusor M."/>
            <person name="Yao A.I."/>
            <person name="Wu D."/>
            <person name="Madern D."/>
            <person name="Eisen J.A."/>
            <person name="Darling A.E."/>
            <person name="Facciotti M.T."/>
        </authorList>
    </citation>
    <scope>NUCLEOTIDE SEQUENCE [LARGE SCALE GENOMIC DNA]</scope>
    <source>
        <strain>ATCC 49778 / DSM 6131 / JCM 7785 / NBRC 101032 / NCIMB 13157 / TR-1</strain>
    </source>
</reference>
<gene>
    <name evidence="2" type="primary">crtD</name>
    <name evidence="2" type="synonym">c0507</name>
    <name evidence="5" type="ORF">C444_12917</name>
</gene>
<comment type="function">
    <text evidence="1">Involved in the biosynthesis of the acyclic C50 carotenoid bacterioruberin (BR). CrtD is involved in the desaturation reactions that form double bonds at C-3,4 of dihydroisopentenyldehydrorhodopin (DH-IDR) and C-3',4' of dihydrobisanhydrobacterioruberin (DH-BABR) to yield isopentenyld ehydrorhodopin (IDR) and bisanhydrobacterioruberin (BABR), respectively.</text>
</comment>
<comment type="catalytic activity">
    <reaction evidence="1">
        <text>dihydroisopentenyldehydrorhodopin + A = isopentenyldehydrorhodopin + AH2</text>
        <dbReference type="Rhea" id="RHEA:46968"/>
        <dbReference type="ChEBI" id="CHEBI:13193"/>
        <dbReference type="ChEBI" id="CHEBI:17499"/>
        <dbReference type="ChEBI" id="CHEBI:87162"/>
        <dbReference type="ChEBI" id="CHEBI:87163"/>
        <dbReference type="EC" id="1.3.99.37"/>
    </reaction>
</comment>
<comment type="catalytic activity">
    <reaction evidence="1">
        <text>dihydrobisanhydrobacterioruberin + A = bisanhydrobacterioruberin + AH2</text>
        <dbReference type="Rhea" id="RHEA:46972"/>
        <dbReference type="ChEBI" id="CHEBI:13193"/>
        <dbReference type="ChEBI" id="CHEBI:17499"/>
        <dbReference type="ChEBI" id="CHEBI:87121"/>
        <dbReference type="ChEBI" id="CHEBI:87161"/>
        <dbReference type="EC" id="1.3.99.37"/>
    </reaction>
</comment>
<comment type="pathway">
    <text evidence="4">Carotenoid biosynthesis.</text>
</comment>
<comment type="disruption phenotype">
    <text evidence="1">Cells lacking this gene accumulate DH-IDR and DH-BABR.</text>
</comment>
<comment type="similarity">
    <text evidence="3">Belongs to the carotenoid/retinoid oxidoreductase family.</text>
</comment>
<sequence length="495" mass="55506">MSDLSGEDVTVVGGGIGGLSAACYLADAGADVSLLEKNEQLGGRASRLEVDGFRFDMGPSWYLMPDVFERFFAYFGKEPRDYYDLQRLDPHYRIFFKDGDQIDVTGDNDEMAQKFEEYEPGAGEAFEEYLSTSERHYETAMNKFVYQDRSELRDWVDLDVMTAAPVGLQLIGTMQSHVEDYFEHPKLQQIMQYTLVFLGGSPRTTPALYNMMSHVDFNLGVYYPDGGVGAVVDGLVELGEELGVTYETDAEVEEISRRKEGFLVETVHGDTTHPDEVVVNADYAHAERELLPDHERQYDDDYWDDKTYAPSAFLMYMGVEGDVEPLEHHTLVLPTDWDPHFDDIFDEPAWPDDPAYYLCVPSKTDDSVAPDGHSNLFVLVPIAPGLHDGDEIRQEYREKVLADIADNTGVDLRDRIVYEKQFAVSDFGERYNATEGTALGLAHTLRQTALLRPNNRSSAVDGLYFTGSFTTPGIGVPMCLISGEHTAEALIEDIA</sequence>
<accession>A0A0A1GKA2</accession>
<accession>M0L809</accession>
<name>CRTD_HALJT</name>